<reference key="1">
    <citation type="journal article" date="2002" name="Environ. Microbiol.">
        <title>Complete genome sequence and comparative analysis of the metabolically versatile Pseudomonas putida KT2440.</title>
        <authorList>
            <person name="Nelson K.E."/>
            <person name="Weinel C."/>
            <person name="Paulsen I.T."/>
            <person name="Dodson R.J."/>
            <person name="Hilbert H."/>
            <person name="Martins dos Santos V.A.P."/>
            <person name="Fouts D.E."/>
            <person name="Gill S.R."/>
            <person name="Pop M."/>
            <person name="Holmes M."/>
            <person name="Brinkac L.M."/>
            <person name="Beanan M.J."/>
            <person name="DeBoy R.T."/>
            <person name="Daugherty S.C."/>
            <person name="Kolonay J.F."/>
            <person name="Madupu R."/>
            <person name="Nelson W.C."/>
            <person name="White O."/>
            <person name="Peterson J.D."/>
            <person name="Khouri H.M."/>
            <person name="Hance I."/>
            <person name="Chris Lee P."/>
            <person name="Holtzapple E.K."/>
            <person name="Scanlan D."/>
            <person name="Tran K."/>
            <person name="Moazzez A."/>
            <person name="Utterback T.R."/>
            <person name="Rizzo M."/>
            <person name="Lee K."/>
            <person name="Kosack D."/>
            <person name="Moestl D."/>
            <person name="Wedler H."/>
            <person name="Lauber J."/>
            <person name="Stjepandic D."/>
            <person name="Hoheisel J."/>
            <person name="Straetz M."/>
            <person name="Heim S."/>
            <person name="Kiewitz C."/>
            <person name="Eisen J.A."/>
            <person name="Timmis K.N."/>
            <person name="Duesterhoeft A."/>
            <person name="Tuemmler B."/>
            <person name="Fraser C.M."/>
        </authorList>
    </citation>
    <scope>NUCLEOTIDE SEQUENCE [LARGE SCALE GENOMIC DNA]</scope>
    <source>
        <strain>ATCC 47054 / DSM 6125 / CFBP 8728 / NCIMB 11950 / KT2440</strain>
    </source>
</reference>
<reference key="2">
    <citation type="journal article" date="2011" name="Mol. Microbiol.">
        <title>Unravelling the gallic acid degradation pathway in bacteria: the gal cluster from Pseudomonas putida.</title>
        <authorList>
            <person name="Nogales J."/>
            <person name="Canales A."/>
            <person name="Jimenez-Barbero J."/>
            <person name="Serra B."/>
            <person name="Pingarron J.M."/>
            <person name="Garcia J.L."/>
            <person name="Diaz E."/>
        </authorList>
    </citation>
    <scope>FUNCTION</scope>
    <source>
        <strain>ATCC 47054 / DSM 6125 / CFBP 8728 / NCIMB 11950 / KT2440</strain>
    </source>
</reference>
<sequence>MKCRTLYPLVPTFALAASLPLQALAEGFVDDAKASLTLRNFYMNRDYTGTASQGKAEEWTQSFIFDFKSGYTPGVVGFGVDVLGLYSIKLDGGKGTAGTQLLPVHDDGRPADDFGRTALAGKMRVSRTELKVGEWSPTLPILRADDGRSLPQTLQGAQVTSNELAGLSLYGGQFRQNSPRNDASMQDMSLFTRTAFTSDRFNFAGGEYRFNQERTLVGAWYAQLEDIYQQRYFQVQHQQPLGNWVLGANLGYFWGKDDGGAKAGELNNRTASGLFSAKLGGNTFYVGLQKVMGDDEWFRVNGASGGTLANDAFGSSYESARERSWQVRHDFNFVVLGIPGLTLMNRYIHGYNVHNASTQGRESELAYVVQSGPFKALNLKWRNSSQRRDWGSTNSFDENRLIVSYPLSLL</sequence>
<feature type="signal peptide" evidence="1">
    <location>
        <begin position="1"/>
        <end position="25"/>
    </location>
</feature>
<feature type="chain" id="PRO_0000418475" description="Porin-like protein GalP">
    <location>
        <begin position="26"/>
        <end position="410"/>
    </location>
</feature>
<proteinExistence type="inferred from homology"/>
<evidence type="ECO:0000255" key="1"/>
<evidence type="ECO:0000305" key="2"/>
<evidence type="ECO:0000305" key="3">
    <source>
    </source>
</evidence>
<gene>
    <name type="primary">galP</name>
    <name type="ordered locus">PP_2517</name>
</gene>
<comment type="function">
    <text evidence="3">Probable transporter, possibly involved in the gallate degradation pathway. May play a role in the uptake of low gallate concentrations that may exist in the natural habitats of P.putida (Probable).</text>
</comment>
<comment type="similarity">
    <text evidence="2">Belongs to the outer membrane porin (Opr) (TC 1.B.25) family.</text>
</comment>
<protein>
    <recommendedName>
        <fullName>Porin-like protein GalP</fullName>
    </recommendedName>
    <alternativeName>
        <fullName>Gallate degradation protein P</fullName>
    </alternativeName>
</protein>
<name>GALP_PSEPK</name>
<accession>Q88JX6</accession>
<dbReference type="EMBL" id="AE015451">
    <property type="protein sequence ID" value="AAN68129.1"/>
    <property type="molecule type" value="Genomic_DNA"/>
</dbReference>
<dbReference type="RefSeq" id="NP_744665.1">
    <property type="nucleotide sequence ID" value="NC_002947.4"/>
</dbReference>
<dbReference type="RefSeq" id="WP_010953451.1">
    <property type="nucleotide sequence ID" value="NZ_CP169744.1"/>
</dbReference>
<dbReference type="SMR" id="Q88JX6"/>
<dbReference type="STRING" id="160488.PP_2517"/>
<dbReference type="PaxDb" id="160488-PP_2517"/>
<dbReference type="KEGG" id="ppu:PP_2517"/>
<dbReference type="PATRIC" id="fig|160488.4.peg.2672"/>
<dbReference type="eggNOG" id="ENOG5032R7I">
    <property type="taxonomic scope" value="Bacteria"/>
</dbReference>
<dbReference type="HOGENOM" id="CLU_042378_2_1_6"/>
<dbReference type="OrthoDB" id="6759120at2"/>
<dbReference type="PhylomeDB" id="Q88JX6"/>
<dbReference type="BioCyc" id="PPUT160488:G1G01-2701-MONOMER"/>
<dbReference type="Proteomes" id="UP000000556">
    <property type="component" value="Chromosome"/>
</dbReference>
<dbReference type="GO" id="GO:0016020">
    <property type="term" value="C:membrane"/>
    <property type="evidence" value="ECO:0007669"/>
    <property type="project" value="InterPro"/>
</dbReference>
<dbReference type="GO" id="GO:0015288">
    <property type="term" value="F:porin activity"/>
    <property type="evidence" value="ECO:0007669"/>
    <property type="project" value="TreeGrafter"/>
</dbReference>
<dbReference type="GO" id="GO:0009056">
    <property type="term" value="P:catabolic process"/>
    <property type="evidence" value="ECO:0007669"/>
    <property type="project" value="UniProtKB-KW"/>
</dbReference>
<dbReference type="Gene3D" id="2.40.160.10">
    <property type="entry name" value="Porin"/>
    <property type="match status" value="1"/>
</dbReference>
<dbReference type="InterPro" id="IPR005318">
    <property type="entry name" value="OM_porin_bac"/>
</dbReference>
<dbReference type="InterPro" id="IPR023614">
    <property type="entry name" value="Porin_dom_sf"/>
</dbReference>
<dbReference type="PANTHER" id="PTHR34596">
    <property type="entry name" value="CHITOPORIN"/>
    <property type="match status" value="1"/>
</dbReference>
<dbReference type="PANTHER" id="PTHR34596:SF2">
    <property type="entry name" value="CHITOPORIN"/>
    <property type="match status" value="1"/>
</dbReference>
<dbReference type="Pfam" id="PF03573">
    <property type="entry name" value="OprD"/>
    <property type="match status" value="1"/>
</dbReference>
<keyword id="KW-0058">Aromatic hydrocarbons catabolism</keyword>
<keyword id="KW-1185">Reference proteome</keyword>
<keyword id="KW-0732">Signal</keyword>
<keyword id="KW-0813">Transport</keyword>
<organism>
    <name type="scientific">Pseudomonas putida (strain ATCC 47054 / DSM 6125 / CFBP 8728 / NCIMB 11950 / KT2440)</name>
    <dbReference type="NCBI Taxonomy" id="160488"/>
    <lineage>
        <taxon>Bacteria</taxon>
        <taxon>Pseudomonadati</taxon>
        <taxon>Pseudomonadota</taxon>
        <taxon>Gammaproteobacteria</taxon>
        <taxon>Pseudomonadales</taxon>
        <taxon>Pseudomonadaceae</taxon>
        <taxon>Pseudomonas</taxon>
    </lineage>
</organism>